<proteinExistence type="evidence at protein level"/>
<reference evidence="6" key="1">
    <citation type="journal article" date="2020" name="Microbiol. Resour. Announc.">
        <title>Complete Genome Sequences of Seven Uropathogenic Escherichia coli Strains Isolated from Postmenopausal Women with Recurrent Urinary Tract Infection.</title>
        <authorList>
            <person name="Sharon B.M."/>
            <person name="Nguyen A."/>
            <person name="Arute A.P."/>
            <person name="Hulyalkar N.V."/>
            <person name="Nguyen V.H."/>
            <person name="Zimmern P.E."/>
            <person name="De Nisco N.J."/>
        </authorList>
    </citation>
    <scope>NUCLEOTIDE SEQUENCE [LARGE SCALE GENOMIC DNA]</scope>
    <source>
        <strain>EcPF14 UPEC</strain>
    </source>
</reference>
<reference key="2">
    <citation type="journal article" date="2022" name="Nucleic Acids Res.">
        <title>Control of bacterial immune signaling by a WYL domain transcription factor.</title>
        <authorList>
            <person name="Blankenchip C.L."/>
            <person name="Nguyen J.V."/>
            <person name="Lau R.K."/>
            <person name="Ye Q."/>
            <person name="Gu Y."/>
            <person name="Corbett K.D."/>
        </authorList>
    </citation>
    <scope>FUNCTION IN VIRAL DEFENSE</scope>
    <source>
        <strain>EcPF14 UPEC</strain>
    </source>
</reference>
<feature type="chain" id="PRO_0000459327" description="CD-NTase-associated protein 7">
    <location>
        <begin position="1"/>
        <end position="162"/>
    </location>
</feature>
<feature type="region of interest" description="Disordered" evidence="2">
    <location>
        <begin position="138"/>
        <end position="162"/>
    </location>
</feature>
<feature type="compositionally biased region" description="Polar residues" evidence="2">
    <location>
        <begin position="139"/>
        <end position="154"/>
    </location>
</feature>
<dbReference type="EMBL" id="CP054230">
    <property type="protein sequence ID" value="QKY44557.1"/>
    <property type="molecule type" value="Genomic_DNA"/>
</dbReference>
<dbReference type="RefSeq" id="WP_001534690.1">
    <property type="nucleotide sequence ID" value="NZ_WIKR01000024.1"/>
</dbReference>
<dbReference type="SMR" id="P0DX78"/>
<dbReference type="GO" id="GO:0051607">
    <property type="term" value="P:defense response to virus"/>
    <property type="evidence" value="ECO:0007669"/>
    <property type="project" value="UniProtKB-KW"/>
</dbReference>
<dbReference type="InterPro" id="IPR041162">
    <property type="entry name" value="Bact_HORMA_1"/>
</dbReference>
<dbReference type="Pfam" id="PF18138">
    <property type="entry name" value="bacHORMA_1"/>
    <property type="match status" value="1"/>
</dbReference>
<protein>
    <recommendedName>
        <fullName evidence="4">CD-NTase-associated protein 7</fullName>
        <shortName evidence="4">Cap7</shortName>
    </recommendedName>
    <alternativeName>
        <fullName evidence="4">Bacterial HORMA sensor protein</fullName>
    </alternativeName>
</protein>
<name>CAP7_ECOLX</name>
<organism>
    <name type="scientific">Escherichia coli</name>
    <dbReference type="NCBI Taxonomy" id="562"/>
    <lineage>
        <taxon>Bacteria</taxon>
        <taxon>Pseudomonadati</taxon>
        <taxon>Pseudomonadota</taxon>
        <taxon>Gammaproteobacteria</taxon>
        <taxon>Enterobacterales</taxon>
        <taxon>Enterobacteriaceae</taxon>
        <taxon>Escherichia</taxon>
    </lineage>
</organism>
<gene>
    <name evidence="4" type="primary">cap7</name>
    <name evidence="6" type="ORF">HR072_00390</name>
</gene>
<keyword id="KW-0051">Antiviral defense</keyword>
<evidence type="ECO:0000250" key="1">
    <source>
        <dbReference type="UniProtKB" id="D7Y2H3"/>
    </source>
</evidence>
<evidence type="ECO:0000256" key="2">
    <source>
        <dbReference type="SAM" id="MobiDB-lite"/>
    </source>
</evidence>
<evidence type="ECO:0000269" key="3">
    <source>
    </source>
</evidence>
<evidence type="ECO:0000303" key="4">
    <source>
    </source>
</evidence>
<evidence type="ECO:0000305" key="5"/>
<evidence type="ECO:0000312" key="6">
    <source>
        <dbReference type="EMBL" id="QKY44557.1"/>
    </source>
</evidence>
<comment type="function">
    <text evidence="1 3 4">Sensor protein of a CBASS antivirus system (By similarity). CBASS (cyclic oligonucleotide-based antiphage signaling system) provides immunity against bacteriophage (PubMed:35536256). The CD-NTase protein synthesizes cyclic nucleotides in response to infection; these serve as specific second messenger signals (PubMed:35536256). The signals activate a diverse range of effectors, leading to bacterial cell death and thus abortive phage infection (PubMed:35536256). A type III CBASS system (PubMed:35536256). Expression of this CBASS system (Cap17-CapW-CdnC-Cap7-Cap6-Cap18-Cap19) in a susceptible E.coli (strain JP313) confers resistance to bacteriophage lambda cI- (PubMed:35536256). The sensor protein for this CBASS system. Binds to a closure peptide, which allows it to activate CdnC for second messenger synthesis (By similarity).</text>
</comment>
<comment type="subunit">
    <text evidence="1">Forms complexes with CdnC with 1:1 and 2:2 stoichimetry, and a 1:1:6 CdnC:Cap7:Cap6 complex.</text>
</comment>
<comment type="similarity">
    <text evidence="5">Belongs to the HORMA family. HORMA1 subfamily.</text>
</comment>
<accession>P0DX78</accession>
<sequence length="162" mass="18015">MSYSSTETSTYTTIDVEAVMRRITADLVMIAASTGAITESKAREYAHDIELLAKNGYLDYVDVTLISNGVEQKATRFHVNESGELANDRPGDARWPRIQGAYLRIVVNNRSTYDQAARQKLSGKMKISWSPCSDDISHSGLTQSGGREYSSNGYGMQRKDYN</sequence>